<organism>
    <name type="scientific">Methanothermobacter thermautotrophicus (strain ATCC 29096 / DSM 1053 / JCM 10044 / NBRC 100330 / Delta H)</name>
    <name type="common">Methanobacterium thermoautotrophicum</name>
    <dbReference type="NCBI Taxonomy" id="187420"/>
    <lineage>
        <taxon>Archaea</taxon>
        <taxon>Methanobacteriati</taxon>
        <taxon>Methanobacteriota</taxon>
        <taxon>Methanomada group</taxon>
        <taxon>Methanobacteria</taxon>
        <taxon>Methanobacteriales</taxon>
        <taxon>Methanobacteriaceae</taxon>
        <taxon>Methanothermobacter</taxon>
    </lineage>
</organism>
<sequence>MIRVATAECFTHGFVAREIHAYSMGYPGGYSWSVDSDVVLVAGLFIPTLSGIRSILKFEPPEPSATLNDIKVYTEEEDERVALMMARSVRELTSADLGIGTTAGIGRGGIAVVSENREEVINSDVEADLRFSGAEEILMRQRSGIRCALELLESFLE</sequence>
<accession>O27216</accession>
<accession>Q50507</accession>
<gene>
    <name type="ordered locus">MTH_1148</name>
</gene>
<reference key="1">
    <citation type="journal article" date="1997" name="J. Bacteriol.">
        <title>Complete genome sequence of Methanobacterium thermoautotrophicum deltaH: functional analysis and comparative genomics.</title>
        <authorList>
            <person name="Smith D.R."/>
            <person name="Doucette-Stamm L.A."/>
            <person name="Deloughery C."/>
            <person name="Lee H.-M."/>
            <person name="Dubois J."/>
            <person name="Aldredge T."/>
            <person name="Bashirzadeh R."/>
            <person name="Blakely D."/>
            <person name="Cook R."/>
            <person name="Gilbert K."/>
            <person name="Harrison D."/>
            <person name="Hoang L."/>
            <person name="Keagle P."/>
            <person name="Lumm W."/>
            <person name="Pothier B."/>
            <person name="Qiu D."/>
            <person name="Spadafora R."/>
            <person name="Vicare R."/>
            <person name="Wang Y."/>
            <person name="Wierzbowski J."/>
            <person name="Gibson R."/>
            <person name="Jiwani N."/>
            <person name="Caruso A."/>
            <person name="Bush D."/>
            <person name="Safer H."/>
            <person name="Patwell D."/>
            <person name="Prabhakar S."/>
            <person name="McDougall S."/>
            <person name="Shimer G."/>
            <person name="Goyal A."/>
            <person name="Pietrovski S."/>
            <person name="Church G.M."/>
            <person name="Daniels C.J."/>
            <person name="Mao J.-I."/>
            <person name="Rice P."/>
            <person name="Noelling J."/>
            <person name="Reeve J.N."/>
        </authorList>
    </citation>
    <scope>NUCLEOTIDE SEQUENCE [LARGE SCALE GENOMIC DNA]</scope>
    <source>
        <strain>ATCC 29096 / DSM 1053 / JCM 10044 / NBRC 100330 / Delta H</strain>
    </source>
</reference>
<reference key="2">
    <citation type="journal article" date="1995" name="J. Bacteriol.">
        <title>Organization and growth phase-dependent transcription of methane genes in two regions of the Methanobacterium thermoautotrophicum genome.</title>
        <authorList>
            <person name="Noelling J."/>
            <person name="Pihl T.D."/>
            <person name="Vriesema A."/>
            <person name="Reeve J.N."/>
        </authorList>
    </citation>
    <scope>NUCLEOTIDE SEQUENCE [GENOMIC DNA] OF 1-96</scope>
    <source>
        <strain>ATCC 29096 / DSM 1053 / JCM 10044 / NBRC 100330 / Delta H</strain>
    </source>
</reference>
<evidence type="ECO:0000305" key="1"/>
<keyword id="KW-1185">Reference proteome</keyword>
<dbReference type="EMBL" id="AE000666">
    <property type="protein sequence ID" value="AAB85637.1"/>
    <property type="molecule type" value="Genomic_DNA"/>
</dbReference>
<dbReference type="EMBL" id="U19363">
    <property type="protein sequence ID" value="AAA87418.1"/>
    <property type="molecule type" value="Genomic_DNA"/>
</dbReference>
<dbReference type="PIR" id="H69019">
    <property type="entry name" value="H69019"/>
</dbReference>
<dbReference type="RefSeq" id="WP_010876772.1">
    <property type="nucleotide sequence ID" value="NC_000916.1"/>
</dbReference>
<dbReference type="SMR" id="O27216"/>
<dbReference type="STRING" id="187420.MTH_1148"/>
<dbReference type="PaxDb" id="187420-MTH_1148"/>
<dbReference type="EnsemblBacteria" id="AAB85637">
    <property type="protein sequence ID" value="AAB85637"/>
    <property type="gene ID" value="MTH_1148"/>
</dbReference>
<dbReference type="GeneID" id="1471556"/>
<dbReference type="KEGG" id="mth:MTH_1148"/>
<dbReference type="PATRIC" id="fig|187420.15.peg.1125"/>
<dbReference type="HOGENOM" id="CLU_1451416_0_0_2"/>
<dbReference type="InParanoid" id="O27216"/>
<dbReference type="Proteomes" id="UP000005223">
    <property type="component" value="Chromosome"/>
</dbReference>
<dbReference type="HAMAP" id="MF_00673">
    <property type="entry name" value="UPF0254"/>
    <property type="match status" value="1"/>
</dbReference>
<dbReference type="InterPro" id="IPR009625">
    <property type="entry name" value="HcgF"/>
</dbReference>
<dbReference type="NCBIfam" id="NF002122">
    <property type="entry name" value="PRK00962.1"/>
    <property type="match status" value="1"/>
</dbReference>
<dbReference type="Pfam" id="PF06787">
    <property type="entry name" value="HcgF"/>
    <property type="match status" value="1"/>
</dbReference>
<dbReference type="PIRSF" id="PIRSF018786">
    <property type="entry name" value="UPF0254"/>
    <property type="match status" value="1"/>
</dbReference>
<proteinExistence type="inferred from homology"/>
<feature type="chain" id="PRO_0000147369" description="UPF0254 protein MTH_1148">
    <location>
        <begin position="1"/>
        <end position="157"/>
    </location>
</feature>
<feature type="sequence conflict" description="In Ref. 2." evidence="1" ref="2">
    <original>TS</original>
    <variation>RR</variation>
    <location>
        <begin position="93"/>
        <end position="94"/>
    </location>
</feature>
<comment type="similarity">
    <text evidence="1">Belongs to the UPF0254 family.</text>
</comment>
<name>Y1148_METTH</name>
<protein>
    <recommendedName>
        <fullName>UPF0254 protein MTH_1148</fullName>
    </recommendedName>
</protein>